<evidence type="ECO:0000305" key="1"/>
<reference key="1">
    <citation type="journal article" date="1990" name="Plant Mol. Biol.">
        <title>Diverse soybean actin transcripts contain a large intron in the 5' untranslated leader: structural similarity to vertebrate muscle actin genes.</title>
        <authorList>
            <person name="Pearson L."/>
            <person name="Meagher R.B."/>
        </authorList>
    </citation>
    <scope>NUCLEOTIDE SEQUENCE [GENOMIC DNA]</scope>
    <source>
        <strain>cv. Wayne</strain>
    </source>
</reference>
<sequence>MADAEDIQPLVCD</sequence>
<dbReference type="EMBL" id="X17120">
    <property type="protein sequence ID" value="CAA34980.1"/>
    <property type="molecule type" value="Genomic_DNA"/>
</dbReference>
<dbReference type="PIR" id="S15755">
    <property type="entry name" value="S15755"/>
</dbReference>
<dbReference type="STRING" id="3847.P15987"/>
<dbReference type="InParanoid" id="P15987"/>
<dbReference type="Proteomes" id="UP000008827">
    <property type="component" value="Unplaced"/>
</dbReference>
<dbReference type="GO" id="GO:0005737">
    <property type="term" value="C:cytoplasm"/>
    <property type="evidence" value="ECO:0007669"/>
    <property type="project" value="UniProtKB-KW"/>
</dbReference>
<dbReference type="GO" id="GO:0005856">
    <property type="term" value="C:cytoskeleton"/>
    <property type="evidence" value="ECO:0007669"/>
    <property type="project" value="UniProtKB-SubCell"/>
</dbReference>
<dbReference type="GO" id="GO:0005524">
    <property type="term" value="F:ATP binding"/>
    <property type="evidence" value="ECO:0007669"/>
    <property type="project" value="UniProtKB-KW"/>
</dbReference>
<proteinExistence type="inferred from homology"/>
<feature type="chain" id="PRO_0000089025" description="Actin-7">
    <location>
        <begin position="1"/>
        <end position="13" status="greater than"/>
    </location>
</feature>
<feature type="non-terminal residue">
    <location>
        <position position="13"/>
    </location>
</feature>
<comment type="function">
    <text>Actins are highly conserved proteins that are involved in various types of cell motility and are ubiquitously expressed in all eukaryotic cells.</text>
</comment>
<comment type="function">
    <text>Essential component of cell cytoskeleton; plays an important role in cytoplasmic streaming, cell shape determination, cell division, organelle movement and extension growth.</text>
</comment>
<comment type="subcellular location">
    <subcellularLocation>
        <location>Cytoplasm</location>
        <location>Cytoskeleton</location>
    </subcellularLocation>
</comment>
<comment type="miscellaneous">
    <text>There are at least 16 actin genes in soybean.</text>
</comment>
<comment type="similarity">
    <text evidence="1">Belongs to the actin family.</text>
</comment>
<keyword id="KW-0067">ATP-binding</keyword>
<keyword id="KW-0963">Cytoplasm</keyword>
<keyword id="KW-0206">Cytoskeleton</keyword>
<keyword id="KW-0547">Nucleotide-binding</keyword>
<keyword id="KW-1185">Reference proteome</keyword>
<gene>
    <name type="primary">SAC7</name>
</gene>
<organism>
    <name type="scientific">Glycine max</name>
    <name type="common">Soybean</name>
    <name type="synonym">Glycine hispida</name>
    <dbReference type="NCBI Taxonomy" id="3847"/>
    <lineage>
        <taxon>Eukaryota</taxon>
        <taxon>Viridiplantae</taxon>
        <taxon>Streptophyta</taxon>
        <taxon>Embryophyta</taxon>
        <taxon>Tracheophyta</taxon>
        <taxon>Spermatophyta</taxon>
        <taxon>Magnoliopsida</taxon>
        <taxon>eudicotyledons</taxon>
        <taxon>Gunneridae</taxon>
        <taxon>Pentapetalae</taxon>
        <taxon>rosids</taxon>
        <taxon>fabids</taxon>
        <taxon>Fabales</taxon>
        <taxon>Fabaceae</taxon>
        <taxon>Papilionoideae</taxon>
        <taxon>50 kb inversion clade</taxon>
        <taxon>NPAAA clade</taxon>
        <taxon>indigoferoid/millettioid clade</taxon>
        <taxon>Phaseoleae</taxon>
        <taxon>Glycine</taxon>
        <taxon>Glycine subgen. Soja</taxon>
    </lineage>
</organism>
<accession>P15987</accession>
<protein>
    <recommendedName>
        <fullName>Actin-7</fullName>
    </recommendedName>
</protein>
<name>ACT7_SOYBN</name>